<comment type="function">
    <text evidence="1">Catalyzes the S-adenosylmethionine monomethyl esterification of trans-aconitate.</text>
</comment>
<comment type="catalytic activity">
    <reaction evidence="1">
        <text>trans-aconitate + S-adenosyl-L-methionine = (E)-3-(methoxycarbonyl)pent-2-enedioate + S-adenosyl-L-homocysteine</text>
        <dbReference type="Rhea" id="RHEA:14969"/>
        <dbReference type="ChEBI" id="CHEBI:15708"/>
        <dbReference type="ChEBI" id="CHEBI:57470"/>
        <dbReference type="ChEBI" id="CHEBI:57856"/>
        <dbReference type="ChEBI" id="CHEBI:59789"/>
        <dbReference type="EC" id="2.1.1.144"/>
    </reaction>
</comment>
<comment type="subcellular location">
    <subcellularLocation>
        <location evidence="1">Cytoplasm</location>
    </subcellularLocation>
</comment>
<comment type="similarity">
    <text evidence="1">Belongs to the methyltransferase superfamily. Tam family.</text>
</comment>
<name>TAM_RHOP5</name>
<gene>
    <name evidence="1" type="primary">tam</name>
    <name type="ordered locus">RPE_2044</name>
</gene>
<reference key="1">
    <citation type="submission" date="2006-09" db="EMBL/GenBank/DDBJ databases">
        <title>Complete sequence of Rhodopseudomonas palustris BisA53.</title>
        <authorList>
            <consortium name="US DOE Joint Genome Institute"/>
            <person name="Copeland A."/>
            <person name="Lucas S."/>
            <person name="Lapidus A."/>
            <person name="Barry K."/>
            <person name="Detter J.C."/>
            <person name="Glavina del Rio T."/>
            <person name="Hammon N."/>
            <person name="Israni S."/>
            <person name="Dalin E."/>
            <person name="Tice H."/>
            <person name="Pitluck S."/>
            <person name="Chain P."/>
            <person name="Malfatti S."/>
            <person name="Shin M."/>
            <person name="Vergez L."/>
            <person name="Schmutz J."/>
            <person name="Larimer F."/>
            <person name="Land M."/>
            <person name="Hauser L."/>
            <person name="Pelletier D.A."/>
            <person name="Kyrpides N."/>
            <person name="Kim E."/>
            <person name="Harwood C.S."/>
            <person name="Oda Y."/>
            <person name="Richardson P."/>
        </authorList>
    </citation>
    <scope>NUCLEOTIDE SEQUENCE [LARGE SCALE GENOMIC DNA]</scope>
    <source>
        <strain>BisA53</strain>
    </source>
</reference>
<proteinExistence type="inferred from homology"/>
<feature type="chain" id="PRO_1000056575" description="Trans-aconitate 2-methyltransferase">
    <location>
        <begin position="1"/>
        <end position="256"/>
    </location>
</feature>
<dbReference type="EC" id="2.1.1.144" evidence="1"/>
<dbReference type="EMBL" id="CP000463">
    <property type="protein sequence ID" value="ABJ05988.1"/>
    <property type="molecule type" value="Genomic_DNA"/>
</dbReference>
<dbReference type="SMR" id="Q07PZ6"/>
<dbReference type="STRING" id="316055.RPE_2044"/>
<dbReference type="KEGG" id="rpe:RPE_2044"/>
<dbReference type="eggNOG" id="COG4106">
    <property type="taxonomic scope" value="Bacteria"/>
</dbReference>
<dbReference type="HOGENOM" id="CLU_037990_5_2_5"/>
<dbReference type="OrthoDB" id="9795085at2"/>
<dbReference type="GO" id="GO:0005737">
    <property type="term" value="C:cytoplasm"/>
    <property type="evidence" value="ECO:0007669"/>
    <property type="project" value="UniProtKB-SubCell"/>
</dbReference>
<dbReference type="GO" id="GO:0030798">
    <property type="term" value="F:trans-aconitate 2-methyltransferase activity"/>
    <property type="evidence" value="ECO:0007669"/>
    <property type="project" value="UniProtKB-UniRule"/>
</dbReference>
<dbReference type="GO" id="GO:0032259">
    <property type="term" value="P:methylation"/>
    <property type="evidence" value="ECO:0007669"/>
    <property type="project" value="UniProtKB-KW"/>
</dbReference>
<dbReference type="CDD" id="cd02440">
    <property type="entry name" value="AdoMet_MTases"/>
    <property type="match status" value="1"/>
</dbReference>
<dbReference type="Gene3D" id="1.10.150.290">
    <property type="entry name" value="S-adenosyl-L-methionine-dependent methyltransferases"/>
    <property type="match status" value="1"/>
</dbReference>
<dbReference type="Gene3D" id="3.40.50.150">
    <property type="entry name" value="Vaccinia Virus protein VP39"/>
    <property type="match status" value="1"/>
</dbReference>
<dbReference type="HAMAP" id="MF_00560">
    <property type="entry name" value="Tran_acon_Me_trans"/>
    <property type="match status" value="1"/>
</dbReference>
<dbReference type="InterPro" id="IPR041698">
    <property type="entry name" value="Methyltransf_25"/>
</dbReference>
<dbReference type="InterPro" id="IPR029063">
    <property type="entry name" value="SAM-dependent_MTases_sf"/>
</dbReference>
<dbReference type="InterPro" id="IPR023506">
    <property type="entry name" value="Trans-aconitate_MeTrfase"/>
</dbReference>
<dbReference type="InterPro" id="IPR023149">
    <property type="entry name" value="Trans_acon_MeTrfase_C"/>
</dbReference>
<dbReference type="NCBIfam" id="NF002463">
    <property type="entry name" value="PRK01683.1"/>
    <property type="match status" value="1"/>
</dbReference>
<dbReference type="PANTHER" id="PTHR43861:SF1">
    <property type="entry name" value="TRANS-ACONITATE 2-METHYLTRANSFERASE"/>
    <property type="match status" value="1"/>
</dbReference>
<dbReference type="PANTHER" id="PTHR43861">
    <property type="entry name" value="TRANS-ACONITATE 2-METHYLTRANSFERASE-RELATED"/>
    <property type="match status" value="1"/>
</dbReference>
<dbReference type="Pfam" id="PF13649">
    <property type="entry name" value="Methyltransf_25"/>
    <property type="match status" value="1"/>
</dbReference>
<dbReference type="SUPFAM" id="SSF53335">
    <property type="entry name" value="S-adenosyl-L-methionine-dependent methyltransferases"/>
    <property type="match status" value="1"/>
</dbReference>
<evidence type="ECO:0000255" key="1">
    <source>
        <dbReference type="HAMAP-Rule" id="MF_00560"/>
    </source>
</evidence>
<keyword id="KW-0963">Cytoplasm</keyword>
<keyword id="KW-0489">Methyltransferase</keyword>
<keyword id="KW-0949">S-adenosyl-L-methionine</keyword>
<keyword id="KW-0808">Transferase</keyword>
<sequence length="256" mass="28890">MADWSAEQYLKFEDERTRPARDLLAQVWLDDPRRVVDIGCGPGNSTELLVKRWPQAKVTGVDNSADMLRQARERLPGHNFIEANIAHWVAPVGTEVVFANAVFQWVPNHLKHMQRLLGALAPGGVLAVQMPDNLDELSHILMREVAFQEPWREQLSTAAELRDTLPKPGVYYDALRPLCSRLEIWHTVYNHALDSAAAIVEWVRGTGLRPFVDPLELPERKAYLAAYTARIAAAYPPQADGKVLLRFPRIFIVASK</sequence>
<organism>
    <name type="scientific">Rhodopseudomonas palustris (strain BisA53)</name>
    <dbReference type="NCBI Taxonomy" id="316055"/>
    <lineage>
        <taxon>Bacteria</taxon>
        <taxon>Pseudomonadati</taxon>
        <taxon>Pseudomonadota</taxon>
        <taxon>Alphaproteobacteria</taxon>
        <taxon>Hyphomicrobiales</taxon>
        <taxon>Nitrobacteraceae</taxon>
        <taxon>Rhodopseudomonas</taxon>
    </lineage>
</organism>
<protein>
    <recommendedName>
        <fullName evidence="1">Trans-aconitate 2-methyltransferase</fullName>
        <ecNumber evidence="1">2.1.1.144</ecNumber>
    </recommendedName>
</protein>
<accession>Q07PZ6</accession>